<dbReference type="EC" id="4.2.1.11" evidence="1"/>
<dbReference type="EMBL" id="CP000251">
    <property type="protein sequence ID" value="ABC81415.1"/>
    <property type="molecule type" value="Genomic_DNA"/>
</dbReference>
<dbReference type="RefSeq" id="WP_011420698.1">
    <property type="nucleotide sequence ID" value="NC_007760.1"/>
</dbReference>
<dbReference type="SMR" id="Q2IID9"/>
<dbReference type="STRING" id="290397.Adeh_1642"/>
<dbReference type="KEGG" id="ade:Adeh_1642"/>
<dbReference type="eggNOG" id="COG0148">
    <property type="taxonomic scope" value="Bacteria"/>
</dbReference>
<dbReference type="HOGENOM" id="CLU_031223_2_1_7"/>
<dbReference type="OrthoDB" id="9804716at2"/>
<dbReference type="UniPathway" id="UPA00109">
    <property type="reaction ID" value="UER00187"/>
</dbReference>
<dbReference type="Proteomes" id="UP000001935">
    <property type="component" value="Chromosome"/>
</dbReference>
<dbReference type="GO" id="GO:0009986">
    <property type="term" value="C:cell surface"/>
    <property type="evidence" value="ECO:0007669"/>
    <property type="project" value="UniProtKB-SubCell"/>
</dbReference>
<dbReference type="GO" id="GO:0005576">
    <property type="term" value="C:extracellular region"/>
    <property type="evidence" value="ECO:0007669"/>
    <property type="project" value="UniProtKB-SubCell"/>
</dbReference>
<dbReference type="GO" id="GO:0000015">
    <property type="term" value="C:phosphopyruvate hydratase complex"/>
    <property type="evidence" value="ECO:0007669"/>
    <property type="project" value="InterPro"/>
</dbReference>
<dbReference type="GO" id="GO:0000287">
    <property type="term" value="F:magnesium ion binding"/>
    <property type="evidence" value="ECO:0007669"/>
    <property type="project" value="UniProtKB-UniRule"/>
</dbReference>
<dbReference type="GO" id="GO:0004634">
    <property type="term" value="F:phosphopyruvate hydratase activity"/>
    <property type="evidence" value="ECO:0007669"/>
    <property type="project" value="UniProtKB-UniRule"/>
</dbReference>
<dbReference type="GO" id="GO:0006096">
    <property type="term" value="P:glycolytic process"/>
    <property type="evidence" value="ECO:0007669"/>
    <property type="project" value="UniProtKB-UniRule"/>
</dbReference>
<dbReference type="CDD" id="cd03313">
    <property type="entry name" value="enolase"/>
    <property type="match status" value="1"/>
</dbReference>
<dbReference type="FunFam" id="3.20.20.120:FF:000001">
    <property type="entry name" value="Enolase"/>
    <property type="match status" value="1"/>
</dbReference>
<dbReference type="FunFam" id="3.30.390.10:FF:000001">
    <property type="entry name" value="Enolase"/>
    <property type="match status" value="1"/>
</dbReference>
<dbReference type="Gene3D" id="3.20.20.120">
    <property type="entry name" value="Enolase-like C-terminal domain"/>
    <property type="match status" value="1"/>
</dbReference>
<dbReference type="Gene3D" id="3.30.390.10">
    <property type="entry name" value="Enolase-like, N-terminal domain"/>
    <property type="match status" value="1"/>
</dbReference>
<dbReference type="HAMAP" id="MF_00318">
    <property type="entry name" value="Enolase"/>
    <property type="match status" value="1"/>
</dbReference>
<dbReference type="InterPro" id="IPR000941">
    <property type="entry name" value="Enolase"/>
</dbReference>
<dbReference type="InterPro" id="IPR036849">
    <property type="entry name" value="Enolase-like_C_sf"/>
</dbReference>
<dbReference type="InterPro" id="IPR029017">
    <property type="entry name" value="Enolase-like_N"/>
</dbReference>
<dbReference type="InterPro" id="IPR020810">
    <property type="entry name" value="Enolase_C"/>
</dbReference>
<dbReference type="InterPro" id="IPR020809">
    <property type="entry name" value="Enolase_CS"/>
</dbReference>
<dbReference type="InterPro" id="IPR020811">
    <property type="entry name" value="Enolase_N"/>
</dbReference>
<dbReference type="NCBIfam" id="TIGR01060">
    <property type="entry name" value="eno"/>
    <property type="match status" value="1"/>
</dbReference>
<dbReference type="PANTHER" id="PTHR11902">
    <property type="entry name" value="ENOLASE"/>
    <property type="match status" value="1"/>
</dbReference>
<dbReference type="PANTHER" id="PTHR11902:SF1">
    <property type="entry name" value="ENOLASE"/>
    <property type="match status" value="1"/>
</dbReference>
<dbReference type="Pfam" id="PF00113">
    <property type="entry name" value="Enolase_C"/>
    <property type="match status" value="1"/>
</dbReference>
<dbReference type="Pfam" id="PF03952">
    <property type="entry name" value="Enolase_N"/>
    <property type="match status" value="1"/>
</dbReference>
<dbReference type="PIRSF" id="PIRSF001400">
    <property type="entry name" value="Enolase"/>
    <property type="match status" value="1"/>
</dbReference>
<dbReference type="PRINTS" id="PR00148">
    <property type="entry name" value="ENOLASE"/>
</dbReference>
<dbReference type="SFLD" id="SFLDF00002">
    <property type="entry name" value="enolase"/>
    <property type="match status" value="1"/>
</dbReference>
<dbReference type="SFLD" id="SFLDG00178">
    <property type="entry name" value="enolase"/>
    <property type="match status" value="1"/>
</dbReference>
<dbReference type="SMART" id="SM01192">
    <property type="entry name" value="Enolase_C"/>
    <property type="match status" value="1"/>
</dbReference>
<dbReference type="SMART" id="SM01193">
    <property type="entry name" value="Enolase_N"/>
    <property type="match status" value="1"/>
</dbReference>
<dbReference type="SUPFAM" id="SSF51604">
    <property type="entry name" value="Enolase C-terminal domain-like"/>
    <property type="match status" value="1"/>
</dbReference>
<dbReference type="SUPFAM" id="SSF54826">
    <property type="entry name" value="Enolase N-terminal domain-like"/>
    <property type="match status" value="1"/>
</dbReference>
<dbReference type="PROSITE" id="PS00164">
    <property type="entry name" value="ENOLASE"/>
    <property type="match status" value="1"/>
</dbReference>
<gene>
    <name evidence="1" type="primary">eno</name>
    <name type="ordered locus">Adeh_1642</name>
</gene>
<reference key="1">
    <citation type="submission" date="2006-01" db="EMBL/GenBank/DDBJ databases">
        <title>Complete sequence of Anaeromyxobacter dehalogenans 2CP-C.</title>
        <authorList>
            <person name="Copeland A."/>
            <person name="Lucas S."/>
            <person name="Lapidus A."/>
            <person name="Barry K."/>
            <person name="Detter J.C."/>
            <person name="Glavina T."/>
            <person name="Hammon N."/>
            <person name="Israni S."/>
            <person name="Pitluck S."/>
            <person name="Brettin T."/>
            <person name="Bruce D."/>
            <person name="Han C."/>
            <person name="Tapia R."/>
            <person name="Gilna P."/>
            <person name="Kiss H."/>
            <person name="Schmutz J."/>
            <person name="Larimer F."/>
            <person name="Land M."/>
            <person name="Kyrpides N."/>
            <person name="Anderson I."/>
            <person name="Sanford R.A."/>
            <person name="Ritalahti K.M."/>
            <person name="Thomas H.S."/>
            <person name="Kirby J.R."/>
            <person name="Zhulin I.B."/>
            <person name="Loeffler F.E."/>
            <person name="Richardson P."/>
        </authorList>
    </citation>
    <scope>NUCLEOTIDE SEQUENCE [LARGE SCALE GENOMIC DNA]</scope>
    <source>
        <strain>2CP-C</strain>
    </source>
</reference>
<comment type="function">
    <text evidence="1">Catalyzes the reversible conversion of 2-phosphoglycerate (2-PG) into phosphoenolpyruvate (PEP). It is essential for the degradation of carbohydrates via glycolysis.</text>
</comment>
<comment type="catalytic activity">
    <reaction evidence="1">
        <text>(2R)-2-phosphoglycerate = phosphoenolpyruvate + H2O</text>
        <dbReference type="Rhea" id="RHEA:10164"/>
        <dbReference type="ChEBI" id="CHEBI:15377"/>
        <dbReference type="ChEBI" id="CHEBI:58289"/>
        <dbReference type="ChEBI" id="CHEBI:58702"/>
        <dbReference type="EC" id="4.2.1.11"/>
    </reaction>
</comment>
<comment type="cofactor">
    <cofactor evidence="1">
        <name>Mg(2+)</name>
        <dbReference type="ChEBI" id="CHEBI:18420"/>
    </cofactor>
    <text evidence="1">Binds a second Mg(2+) ion via substrate during catalysis.</text>
</comment>
<comment type="pathway">
    <text evidence="1">Carbohydrate degradation; glycolysis; pyruvate from D-glyceraldehyde 3-phosphate: step 4/5.</text>
</comment>
<comment type="subcellular location">
    <subcellularLocation>
        <location evidence="1">Cytoplasm</location>
    </subcellularLocation>
    <subcellularLocation>
        <location evidence="1">Secreted</location>
    </subcellularLocation>
    <subcellularLocation>
        <location evidence="1">Cell surface</location>
    </subcellularLocation>
    <text evidence="1">Fractions of enolase are present in both the cytoplasm and on the cell surface.</text>
</comment>
<comment type="similarity">
    <text evidence="1">Belongs to the enolase family.</text>
</comment>
<proteinExistence type="inferred from homology"/>
<sequence>MTEIINVTAREILDSRGNPTVEVEVAVGTGDVGRAAVPSGASTGEHEALELRDGDKARYLGKGVRKAVANVIDEIAPAVVGLDASDQAALDARMIALDGTPTKSKLGANAILGVSLAAAKAAATAHGLPLYRYVGGAGARTLPVPLMNILNGGAHADSNVDIQEFMVVPLGLPTFAEALRCGAEIFHALKKVLKGKGAATGVGDEGGYAPSLASNEEALAVIMEAIGQAGYEPGKQVALALDCAASEFYDKKAGKYELEGEGKSFDGKGLVEYYAQLAAKYPIVSIEDGCDEDDWATWKLLTERLGGKLQLVGDDLFVTNVTRLARGIEQGVTNSILVKVNQIGSLTETLEAVRMAHRAGYTTVMSHRSGETEDTTIADLAVACDCGQIKTGSASRTDRIAKYNQLLRIEEELGTSGRYAGRSAFKALR</sequence>
<name>ENO_ANADE</name>
<organism>
    <name type="scientific">Anaeromyxobacter dehalogenans (strain 2CP-C)</name>
    <dbReference type="NCBI Taxonomy" id="290397"/>
    <lineage>
        <taxon>Bacteria</taxon>
        <taxon>Pseudomonadati</taxon>
        <taxon>Myxococcota</taxon>
        <taxon>Myxococcia</taxon>
        <taxon>Myxococcales</taxon>
        <taxon>Cystobacterineae</taxon>
        <taxon>Anaeromyxobacteraceae</taxon>
        <taxon>Anaeromyxobacter</taxon>
    </lineage>
</organism>
<keyword id="KW-0963">Cytoplasm</keyword>
<keyword id="KW-0324">Glycolysis</keyword>
<keyword id="KW-0456">Lyase</keyword>
<keyword id="KW-0460">Magnesium</keyword>
<keyword id="KW-0479">Metal-binding</keyword>
<keyword id="KW-1185">Reference proteome</keyword>
<keyword id="KW-0964">Secreted</keyword>
<protein>
    <recommendedName>
        <fullName evidence="1">Enolase</fullName>
        <ecNumber evidence="1">4.2.1.11</ecNumber>
    </recommendedName>
    <alternativeName>
        <fullName evidence="1">2-phospho-D-glycerate hydro-lyase</fullName>
    </alternativeName>
    <alternativeName>
        <fullName evidence="1">2-phosphoglycerate dehydratase</fullName>
    </alternativeName>
</protein>
<feature type="chain" id="PRO_0000266995" description="Enolase">
    <location>
        <begin position="1"/>
        <end position="429"/>
    </location>
</feature>
<feature type="active site" description="Proton donor" evidence="1">
    <location>
        <position position="205"/>
    </location>
</feature>
<feature type="active site" description="Proton acceptor" evidence="1">
    <location>
        <position position="339"/>
    </location>
</feature>
<feature type="binding site" evidence="1">
    <location>
        <position position="163"/>
    </location>
    <ligand>
        <name>(2R)-2-phosphoglycerate</name>
        <dbReference type="ChEBI" id="CHEBI:58289"/>
    </ligand>
</feature>
<feature type="binding site" evidence="1">
    <location>
        <position position="242"/>
    </location>
    <ligand>
        <name>Mg(2+)</name>
        <dbReference type="ChEBI" id="CHEBI:18420"/>
    </ligand>
</feature>
<feature type="binding site" evidence="1">
    <location>
        <position position="287"/>
    </location>
    <ligand>
        <name>Mg(2+)</name>
        <dbReference type="ChEBI" id="CHEBI:18420"/>
    </ligand>
</feature>
<feature type="binding site" evidence="1">
    <location>
        <position position="314"/>
    </location>
    <ligand>
        <name>Mg(2+)</name>
        <dbReference type="ChEBI" id="CHEBI:18420"/>
    </ligand>
</feature>
<feature type="binding site" evidence="1">
    <location>
        <position position="339"/>
    </location>
    <ligand>
        <name>(2R)-2-phosphoglycerate</name>
        <dbReference type="ChEBI" id="CHEBI:58289"/>
    </ligand>
</feature>
<feature type="binding site" evidence="1">
    <location>
        <position position="368"/>
    </location>
    <ligand>
        <name>(2R)-2-phosphoglycerate</name>
        <dbReference type="ChEBI" id="CHEBI:58289"/>
    </ligand>
</feature>
<feature type="binding site" evidence="1">
    <location>
        <position position="369"/>
    </location>
    <ligand>
        <name>(2R)-2-phosphoglycerate</name>
        <dbReference type="ChEBI" id="CHEBI:58289"/>
    </ligand>
</feature>
<feature type="binding site" evidence="1">
    <location>
        <position position="390"/>
    </location>
    <ligand>
        <name>(2R)-2-phosphoglycerate</name>
        <dbReference type="ChEBI" id="CHEBI:58289"/>
    </ligand>
</feature>
<evidence type="ECO:0000255" key="1">
    <source>
        <dbReference type="HAMAP-Rule" id="MF_00318"/>
    </source>
</evidence>
<accession>Q2IID9</accession>